<gene>
    <name type="primary">EARLI1</name>
    <name type="ordered locus">At4g12480</name>
    <name type="ORF">T1P17.70</name>
</gene>
<evidence type="ECO:0000255" key="1"/>
<evidence type="ECO:0000256" key="2">
    <source>
        <dbReference type="SAM" id="MobiDB-lite"/>
    </source>
</evidence>
<evidence type="ECO:0000269" key="3">
    <source>
    </source>
</evidence>
<evidence type="ECO:0000269" key="4">
    <source>
    </source>
</evidence>
<evidence type="ECO:0000269" key="5">
    <source>
    </source>
</evidence>
<evidence type="ECO:0000269" key="6">
    <source>
    </source>
</evidence>
<evidence type="ECO:0000269" key="7">
    <source>
    </source>
</evidence>
<evidence type="ECO:0000269" key="8">
    <source>
    </source>
</evidence>
<evidence type="ECO:0000269" key="9">
    <source ref="1"/>
</evidence>
<evidence type="ECO:0000305" key="10"/>
<keyword id="KW-0134">Cell wall</keyword>
<keyword id="KW-0611">Plant defense</keyword>
<keyword id="KW-1185">Reference proteome</keyword>
<keyword id="KW-0677">Repeat</keyword>
<keyword id="KW-0964">Secreted</keyword>
<keyword id="KW-0732">Signal</keyword>
<organism>
    <name type="scientific">Arabidopsis thaliana</name>
    <name type="common">Mouse-ear cress</name>
    <dbReference type="NCBI Taxonomy" id="3702"/>
    <lineage>
        <taxon>Eukaryota</taxon>
        <taxon>Viridiplantae</taxon>
        <taxon>Streptophyta</taxon>
        <taxon>Embryophyta</taxon>
        <taxon>Tracheophyta</taxon>
        <taxon>Spermatophyta</taxon>
        <taxon>Magnoliopsida</taxon>
        <taxon>eudicotyledons</taxon>
        <taxon>Gunneridae</taxon>
        <taxon>Pentapetalae</taxon>
        <taxon>rosids</taxon>
        <taxon>malvids</taxon>
        <taxon>Brassicales</taxon>
        <taxon>Brassicaceae</taxon>
        <taxon>Camelineae</taxon>
        <taxon>Arabidopsis</taxon>
    </lineage>
</organism>
<feature type="signal peptide" evidence="1">
    <location>
        <begin position="1"/>
        <end position="25"/>
    </location>
</feature>
<feature type="chain" id="PRO_0000425604" description="Lipid transfer protein EARLI 1">
    <location>
        <begin position="26"/>
        <end position="168"/>
    </location>
</feature>
<feature type="repeat" description="A-1">
    <location>
        <begin position="34"/>
        <end position="41"/>
    </location>
</feature>
<feature type="repeat" description="A-2">
    <location>
        <begin position="42"/>
        <end position="49"/>
    </location>
</feature>
<feature type="repeat" description="A-3">
    <location>
        <begin position="50"/>
        <end position="57"/>
    </location>
</feature>
<feature type="repeat" description="B-1">
    <location>
        <begin position="58"/>
        <end position="62"/>
    </location>
</feature>
<feature type="repeat" description="B-2">
    <location>
        <begin position="63"/>
        <end position="67"/>
    </location>
</feature>
<feature type="region of interest" description="Disordered" evidence="2">
    <location>
        <begin position="32"/>
        <end position="81"/>
    </location>
</feature>
<feature type="region of interest" description="3 X 8 AA repeats A of P-K-[HP]-K-P-V-P-S">
    <location>
        <begin position="34"/>
        <end position="57"/>
    </location>
</feature>
<feature type="region of interest" description="2 X 58 AA tandem repeats B of P-S-V-P-S">
    <location>
        <begin position="58"/>
        <end position="67"/>
    </location>
</feature>
<feature type="compositionally biased region" description="Pro residues" evidence="2">
    <location>
        <begin position="39"/>
        <end position="78"/>
    </location>
</feature>
<accession>Q39176</accession>
<protein>
    <recommendedName>
        <fullName>Lipid transfer protein EARLI 1</fullName>
    </recommendedName>
    <alternativeName>
        <fullName>Protein EARLY ARABIDOPSIS ALUMINUM INDUCED 1</fullName>
        <shortName>pEARLI1</shortName>
    </alternativeName>
</protein>
<reference key="1">
    <citation type="online journal article" date="1995" name="Plant Gene Register">
        <title>pEARLI 1: an Arabidopsis member of a conserved gene family.</title>
        <authorList>
            <person name="Richards K.D."/>
            <person name="Gardner R.C."/>
        </authorList>
        <locator>PGR95-099</locator>
    </citation>
    <scope>NUCLEOTIDE SEQUENCE [MRNA]</scope>
    <scope>INDUCTION BY ALUMINUM</scope>
    <scope>TISSUE SPECIFICITY</scope>
    <source>
        <strain>cv. Columbia</strain>
        <tissue>Seedling</tissue>
    </source>
</reference>
<reference key="2">
    <citation type="journal article" date="1999" name="Nature">
        <title>Sequence and analysis of chromosome 4 of the plant Arabidopsis thaliana.</title>
        <authorList>
            <person name="Mayer K.F.X."/>
            <person name="Schueller C."/>
            <person name="Wambutt R."/>
            <person name="Murphy G."/>
            <person name="Volckaert G."/>
            <person name="Pohl T."/>
            <person name="Duesterhoeft A."/>
            <person name="Stiekema W."/>
            <person name="Entian K.-D."/>
            <person name="Terryn N."/>
            <person name="Harris B."/>
            <person name="Ansorge W."/>
            <person name="Brandt P."/>
            <person name="Grivell L.A."/>
            <person name="Rieger M."/>
            <person name="Weichselgartner M."/>
            <person name="de Simone V."/>
            <person name="Obermaier B."/>
            <person name="Mache R."/>
            <person name="Mueller M."/>
            <person name="Kreis M."/>
            <person name="Delseny M."/>
            <person name="Puigdomenech P."/>
            <person name="Watson M."/>
            <person name="Schmidtheini T."/>
            <person name="Reichert B."/>
            <person name="Portetelle D."/>
            <person name="Perez-Alonso M."/>
            <person name="Boutry M."/>
            <person name="Bancroft I."/>
            <person name="Vos P."/>
            <person name="Hoheisel J."/>
            <person name="Zimmermann W."/>
            <person name="Wedler H."/>
            <person name="Ridley P."/>
            <person name="Langham S.-A."/>
            <person name="McCullagh B."/>
            <person name="Bilham L."/>
            <person name="Robben J."/>
            <person name="van der Schueren J."/>
            <person name="Grymonprez B."/>
            <person name="Chuang Y.-J."/>
            <person name="Vandenbussche F."/>
            <person name="Braeken M."/>
            <person name="Weltjens I."/>
            <person name="Voet M."/>
            <person name="Bastiaens I."/>
            <person name="Aert R."/>
            <person name="Defoor E."/>
            <person name="Weitzenegger T."/>
            <person name="Bothe G."/>
            <person name="Ramsperger U."/>
            <person name="Hilbert H."/>
            <person name="Braun M."/>
            <person name="Holzer E."/>
            <person name="Brandt A."/>
            <person name="Peters S."/>
            <person name="van Staveren M."/>
            <person name="Dirkse W."/>
            <person name="Mooijman P."/>
            <person name="Klein Lankhorst R."/>
            <person name="Rose M."/>
            <person name="Hauf J."/>
            <person name="Koetter P."/>
            <person name="Berneiser S."/>
            <person name="Hempel S."/>
            <person name="Feldpausch M."/>
            <person name="Lamberth S."/>
            <person name="Van den Daele H."/>
            <person name="De Keyser A."/>
            <person name="Buysshaert C."/>
            <person name="Gielen J."/>
            <person name="Villarroel R."/>
            <person name="De Clercq R."/>
            <person name="van Montagu M."/>
            <person name="Rogers J."/>
            <person name="Cronin A."/>
            <person name="Quail M.A."/>
            <person name="Bray-Allen S."/>
            <person name="Clark L."/>
            <person name="Doggett J."/>
            <person name="Hall S."/>
            <person name="Kay M."/>
            <person name="Lennard N."/>
            <person name="McLay K."/>
            <person name="Mayes R."/>
            <person name="Pettett A."/>
            <person name="Rajandream M.A."/>
            <person name="Lyne M."/>
            <person name="Benes V."/>
            <person name="Rechmann S."/>
            <person name="Borkova D."/>
            <person name="Bloecker H."/>
            <person name="Scharfe M."/>
            <person name="Grimm M."/>
            <person name="Loehnert T.-H."/>
            <person name="Dose S."/>
            <person name="de Haan M."/>
            <person name="Maarse A.C."/>
            <person name="Schaefer M."/>
            <person name="Mueller-Auer S."/>
            <person name="Gabel C."/>
            <person name="Fuchs M."/>
            <person name="Fartmann B."/>
            <person name="Granderath K."/>
            <person name="Dauner D."/>
            <person name="Herzl A."/>
            <person name="Neumann S."/>
            <person name="Argiriou A."/>
            <person name="Vitale D."/>
            <person name="Liguori R."/>
            <person name="Piravandi E."/>
            <person name="Massenet O."/>
            <person name="Quigley F."/>
            <person name="Clabauld G."/>
            <person name="Muendlein A."/>
            <person name="Felber R."/>
            <person name="Schnabl S."/>
            <person name="Hiller R."/>
            <person name="Schmidt W."/>
            <person name="Lecharny A."/>
            <person name="Aubourg S."/>
            <person name="Chefdor F."/>
            <person name="Cooke R."/>
            <person name="Berger C."/>
            <person name="Monfort A."/>
            <person name="Casacuberta E."/>
            <person name="Gibbons T."/>
            <person name="Weber N."/>
            <person name="Vandenbol M."/>
            <person name="Bargues M."/>
            <person name="Terol J."/>
            <person name="Torres A."/>
            <person name="Perez-Perez A."/>
            <person name="Purnelle B."/>
            <person name="Bent E."/>
            <person name="Johnson S."/>
            <person name="Tacon D."/>
            <person name="Jesse T."/>
            <person name="Heijnen L."/>
            <person name="Schwarz S."/>
            <person name="Scholler P."/>
            <person name="Heber S."/>
            <person name="Francs P."/>
            <person name="Bielke C."/>
            <person name="Frishman D."/>
            <person name="Haase D."/>
            <person name="Lemcke K."/>
            <person name="Mewes H.-W."/>
            <person name="Stocker S."/>
            <person name="Zaccaria P."/>
            <person name="Bevan M."/>
            <person name="Wilson R.K."/>
            <person name="de la Bastide M."/>
            <person name="Habermann K."/>
            <person name="Parnell L."/>
            <person name="Dedhia N."/>
            <person name="Gnoj L."/>
            <person name="Schutz K."/>
            <person name="Huang E."/>
            <person name="Spiegel L."/>
            <person name="Sekhon M."/>
            <person name="Murray J."/>
            <person name="Sheet P."/>
            <person name="Cordes M."/>
            <person name="Abu-Threideh J."/>
            <person name="Stoneking T."/>
            <person name="Kalicki J."/>
            <person name="Graves T."/>
            <person name="Harmon G."/>
            <person name="Edwards J."/>
            <person name="Latreille P."/>
            <person name="Courtney L."/>
            <person name="Cloud J."/>
            <person name="Abbott A."/>
            <person name="Scott K."/>
            <person name="Johnson D."/>
            <person name="Minx P."/>
            <person name="Bentley D."/>
            <person name="Fulton B."/>
            <person name="Miller N."/>
            <person name="Greco T."/>
            <person name="Kemp K."/>
            <person name="Kramer J."/>
            <person name="Fulton L."/>
            <person name="Mardis E."/>
            <person name="Dante M."/>
            <person name="Pepin K."/>
            <person name="Hillier L.W."/>
            <person name="Nelson J."/>
            <person name="Spieth J."/>
            <person name="Ryan E."/>
            <person name="Andrews S."/>
            <person name="Geisel C."/>
            <person name="Layman D."/>
            <person name="Du H."/>
            <person name="Ali J."/>
            <person name="Berghoff A."/>
            <person name="Jones K."/>
            <person name="Drone K."/>
            <person name="Cotton M."/>
            <person name="Joshu C."/>
            <person name="Antonoiu B."/>
            <person name="Zidanic M."/>
            <person name="Strong C."/>
            <person name="Sun H."/>
            <person name="Lamar B."/>
            <person name="Yordan C."/>
            <person name="Ma P."/>
            <person name="Zhong J."/>
            <person name="Preston R."/>
            <person name="Vil D."/>
            <person name="Shekher M."/>
            <person name="Matero A."/>
            <person name="Shah R."/>
            <person name="Swaby I.K."/>
            <person name="O'Shaughnessy A."/>
            <person name="Rodriguez M."/>
            <person name="Hoffman J."/>
            <person name="Till S."/>
            <person name="Granat S."/>
            <person name="Shohdy N."/>
            <person name="Hasegawa A."/>
            <person name="Hameed A."/>
            <person name="Lodhi M."/>
            <person name="Johnson A."/>
            <person name="Chen E."/>
            <person name="Marra M.A."/>
            <person name="Martienssen R."/>
            <person name="McCombie W.R."/>
        </authorList>
    </citation>
    <scope>NUCLEOTIDE SEQUENCE [LARGE SCALE GENOMIC DNA]</scope>
    <source>
        <strain>cv. Columbia</strain>
    </source>
</reference>
<reference key="3">
    <citation type="journal article" date="2017" name="Plant J.">
        <title>Araport11: a complete reannotation of the Arabidopsis thaliana reference genome.</title>
        <authorList>
            <person name="Cheng C.Y."/>
            <person name="Krishnakumar V."/>
            <person name="Chan A.P."/>
            <person name="Thibaud-Nissen F."/>
            <person name="Schobel S."/>
            <person name="Town C.D."/>
        </authorList>
    </citation>
    <scope>GENOME REANNOTATION</scope>
    <source>
        <strain>cv. Columbia</strain>
    </source>
</reference>
<reference key="4">
    <citation type="journal article" date="2003" name="Science">
        <title>Empirical analysis of transcriptional activity in the Arabidopsis genome.</title>
        <authorList>
            <person name="Yamada K."/>
            <person name="Lim J."/>
            <person name="Dale J.M."/>
            <person name="Chen H."/>
            <person name="Shinn P."/>
            <person name="Palm C.J."/>
            <person name="Southwick A.M."/>
            <person name="Wu H.C."/>
            <person name="Kim C.J."/>
            <person name="Nguyen M."/>
            <person name="Pham P.K."/>
            <person name="Cheuk R.F."/>
            <person name="Karlin-Newmann G."/>
            <person name="Liu S.X."/>
            <person name="Lam B."/>
            <person name="Sakano H."/>
            <person name="Wu T."/>
            <person name="Yu G."/>
            <person name="Miranda M."/>
            <person name="Quach H.L."/>
            <person name="Tripp M."/>
            <person name="Chang C.H."/>
            <person name="Lee J.M."/>
            <person name="Toriumi M.J."/>
            <person name="Chan M.M."/>
            <person name="Tang C.C."/>
            <person name="Onodera C.S."/>
            <person name="Deng J.M."/>
            <person name="Akiyama K."/>
            <person name="Ansari Y."/>
            <person name="Arakawa T."/>
            <person name="Banh J."/>
            <person name="Banno F."/>
            <person name="Bowser L."/>
            <person name="Brooks S.Y."/>
            <person name="Carninci P."/>
            <person name="Chao Q."/>
            <person name="Choy N."/>
            <person name="Enju A."/>
            <person name="Goldsmith A.D."/>
            <person name="Gurjal M."/>
            <person name="Hansen N.F."/>
            <person name="Hayashizaki Y."/>
            <person name="Johnson-Hopson C."/>
            <person name="Hsuan V.W."/>
            <person name="Iida K."/>
            <person name="Karnes M."/>
            <person name="Khan S."/>
            <person name="Koesema E."/>
            <person name="Ishida J."/>
            <person name="Jiang P.X."/>
            <person name="Jones T."/>
            <person name="Kawai J."/>
            <person name="Kamiya A."/>
            <person name="Meyers C."/>
            <person name="Nakajima M."/>
            <person name="Narusaka M."/>
            <person name="Seki M."/>
            <person name="Sakurai T."/>
            <person name="Satou M."/>
            <person name="Tamse R."/>
            <person name="Vaysberg M."/>
            <person name="Wallender E.K."/>
            <person name="Wong C."/>
            <person name="Yamamura Y."/>
            <person name="Yuan S."/>
            <person name="Shinozaki K."/>
            <person name="Davis R.W."/>
            <person name="Theologis A."/>
            <person name="Ecker J.R."/>
        </authorList>
    </citation>
    <scope>NUCLEOTIDE SEQUENCE [LARGE SCALE MRNA]</scope>
    <source>
        <strain>cv. Columbia</strain>
    </source>
</reference>
<reference key="5">
    <citation type="submission" date="2006-07" db="EMBL/GenBank/DDBJ databases">
        <title>Large-scale analysis of RIKEN Arabidopsis full-length (RAFL) cDNAs.</title>
        <authorList>
            <person name="Totoki Y."/>
            <person name="Seki M."/>
            <person name="Ishida J."/>
            <person name="Nakajima M."/>
            <person name="Enju A."/>
            <person name="Kamiya A."/>
            <person name="Narusaka M."/>
            <person name="Shin-i T."/>
            <person name="Nakagawa M."/>
            <person name="Sakamoto N."/>
            <person name="Oishi K."/>
            <person name="Kohara Y."/>
            <person name="Kobayashi M."/>
            <person name="Toyoda A."/>
            <person name="Sakaki Y."/>
            <person name="Sakurai T."/>
            <person name="Iida K."/>
            <person name="Akiyama K."/>
            <person name="Satou M."/>
            <person name="Toyoda T."/>
            <person name="Konagaya A."/>
            <person name="Carninci P."/>
            <person name="Kawai J."/>
            <person name="Hayashizaki Y."/>
            <person name="Shinozaki K."/>
        </authorList>
    </citation>
    <scope>NUCLEOTIDE SEQUENCE [LARGE SCALE MRNA]</scope>
    <source>
        <strain>cv. Columbia</strain>
    </source>
</reference>
<reference key="6">
    <citation type="journal article" date="2000" name="Plant Mol. Biol.">
        <title>A gene expression screen identifies EARLI1 as a novel vernalization-responsive gene in Arabidopsis thaliana.</title>
        <authorList>
            <person name="Wilkosz R."/>
            <person name="Schlaeppi M."/>
        </authorList>
    </citation>
    <scope>INDUCTION BY VERNALIZATION</scope>
    <scope>TISSUE SPECIFICITY</scope>
    <source>
        <strain>cv. Columbia</strain>
        <strain>cv. Landsberg erecta</strain>
        <strain>cv. No-0</strain>
    </source>
</reference>
<reference key="7">
    <citation type="journal article" date="2007" name="Plant J.">
        <title>Cuticular defects lead to full immunity to a major plant pathogen.</title>
        <authorList>
            <person name="Chassot C."/>
            <person name="Nawrath C."/>
            <person name="Metraux J.-P."/>
        </authorList>
    </citation>
    <scope>FUNCTION</scope>
</reference>
<reference key="8">
    <citation type="journal article" date="2007" name="Planta">
        <title>Cold responsive EARLI1 type HyPRPs improve freezing survival of yeast cells and form higher order complexes in plants.</title>
        <authorList>
            <person name="Zhang Y."/>
            <person name="Schlappi M."/>
        </authorList>
    </citation>
    <scope>FUNCTION</scope>
    <scope>INDUCTION BY COLD</scope>
    <scope>DISRUPTION PHENOTYPE</scope>
    <scope>SUBCELLULAR LOCATION</scope>
    <scope>GENE FAMILY</scope>
    <source>
        <strain>cv. Columbia</strain>
    </source>
</reference>
<reference key="9">
    <citation type="journal article" date="2011" name="Plant Biol.">
        <title>Influence of EARLI1-like genes on flowering time and lignin synthesis of Arabidopsis thaliana.</title>
        <authorList>
            <person name="Shi Y."/>
            <person name="Zhang X."/>
            <person name="Xu Z.Y."/>
            <person name="Li L."/>
            <person name="Zhang C."/>
            <person name="Schlappi M."/>
            <person name="Xu Z.Q."/>
        </authorList>
    </citation>
    <scope>FUNCTION</scope>
    <scope>DISRUPTION PHENOTYPE</scope>
    <scope>GENE FAMILY</scope>
    <source>
        <strain>cv. Columbia</strain>
    </source>
</reference>
<reference key="10">
    <citation type="journal article" date="2011" name="Planta">
        <title>The HyPRP gene EARLI1 has an auxiliary role for germinability and early seedling development under low temperature and salt stress conditions in Arabidopsis thaliana.</title>
        <authorList>
            <person name="Xu D."/>
            <person name="Huang X."/>
            <person name="Xu Z.Q."/>
            <person name="Schlappi M."/>
        </authorList>
    </citation>
    <scope>FUNCTION</scope>
    <scope>DEVELOPMENTAL STAGE</scope>
    <scope>INDUCTION BY COLD AND SALT</scope>
    <source>
        <strain>cv. Columbia</strain>
    </source>
</reference>
<reference key="11">
    <citation type="journal article" date="2012" name="Gene">
        <title>Expression of recombinant EARLI1, a hybrid proline-rich protein of Arabidopsis, in Escherichia coli and its inhibition effect to the growth of fungal pathogens and Saccharomyces cerevisiae.</title>
        <authorList>
            <person name="Li L."/>
            <person name="Zhang C."/>
            <person name="Xu D."/>
            <person name="Schlappi M."/>
            <person name="Xu Z.Q."/>
        </authorList>
    </citation>
    <scope>FUNCTION AS ANTI-FUNGAL PROTEIN</scope>
    <source>
        <strain>cv. Columbia</strain>
    </source>
</reference>
<dbReference type="EMBL" id="L43080">
    <property type="protein sequence ID" value="AAC37471.1"/>
    <property type="molecule type" value="mRNA"/>
</dbReference>
<dbReference type="EMBL" id="AL049730">
    <property type="protein sequence ID" value="CAB41718.1"/>
    <property type="molecule type" value="Genomic_DNA"/>
</dbReference>
<dbReference type="EMBL" id="AL161534">
    <property type="protein sequence ID" value="CAB78291.1"/>
    <property type="molecule type" value="Genomic_DNA"/>
</dbReference>
<dbReference type="EMBL" id="CP002687">
    <property type="protein sequence ID" value="AEE83138.1"/>
    <property type="molecule type" value="Genomic_DNA"/>
</dbReference>
<dbReference type="EMBL" id="AF412111">
    <property type="protein sequence ID" value="AAL06564.1"/>
    <property type="molecule type" value="mRNA"/>
</dbReference>
<dbReference type="EMBL" id="AY133654">
    <property type="protein sequence ID" value="AAM91484.1"/>
    <property type="molecule type" value="mRNA"/>
</dbReference>
<dbReference type="EMBL" id="AK230253">
    <property type="protein sequence ID" value="BAF02055.1"/>
    <property type="molecule type" value="mRNA"/>
</dbReference>
<dbReference type="PIR" id="T07640">
    <property type="entry name" value="T07640"/>
</dbReference>
<dbReference type="RefSeq" id="NP_192985.1">
    <property type="nucleotide sequence ID" value="NM_117318.3"/>
</dbReference>
<dbReference type="SMR" id="Q39176"/>
<dbReference type="STRING" id="3702.Q39176"/>
<dbReference type="GlyGen" id="Q39176">
    <property type="glycosylation" value="1 site"/>
</dbReference>
<dbReference type="PaxDb" id="3702-AT4G12480.1"/>
<dbReference type="ProteomicsDB" id="220695"/>
<dbReference type="EnsemblPlants" id="AT4G12480.1">
    <property type="protein sequence ID" value="AT4G12480.1"/>
    <property type="gene ID" value="AT4G12480"/>
</dbReference>
<dbReference type="GeneID" id="826860"/>
<dbReference type="Gramene" id="AT4G12480.1">
    <property type="protein sequence ID" value="AT4G12480.1"/>
    <property type="gene ID" value="AT4G12480"/>
</dbReference>
<dbReference type="KEGG" id="ath:AT4G12480"/>
<dbReference type="Araport" id="AT4G12480"/>
<dbReference type="TAIR" id="AT4G12480">
    <property type="gene designation" value="EARLI1"/>
</dbReference>
<dbReference type="eggNOG" id="ENOG502S36E">
    <property type="taxonomic scope" value="Eukaryota"/>
</dbReference>
<dbReference type="HOGENOM" id="CLU_055715_3_2_1"/>
<dbReference type="InParanoid" id="Q39176"/>
<dbReference type="OMA" id="NVCNRKV"/>
<dbReference type="OrthoDB" id="696558at2759"/>
<dbReference type="PhylomeDB" id="Q39176"/>
<dbReference type="PRO" id="PR:Q39176"/>
<dbReference type="Proteomes" id="UP000006548">
    <property type="component" value="Chromosome 4"/>
</dbReference>
<dbReference type="ExpressionAtlas" id="Q39176">
    <property type="expression patterns" value="baseline and differential"/>
</dbReference>
<dbReference type="GO" id="GO:0009707">
    <property type="term" value="C:chloroplast outer membrane"/>
    <property type="evidence" value="ECO:0000314"/>
    <property type="project" value="TAIR"/>
</dbReference>
<dbReference type="GO" id="GO:0005783">
    <property type="term" value="C:endoplasmic reticulum"/>
    <property type="evidence" value="ECO:0000314"/>
    <property type="project" value="TAIR"/>
</dbReference>
<dbReference type="GO" id="GO:0005576">
    <property type="term" value="C:extracellular region"/>
    <property type="evidence" value="ECO:0007669"/>
    <property type="project" value="UniProtKB-KW"/>
</dbReference>
<dbReference type="GO" id="GO:0009505">
    <property type="term" value="C:plant-type cell wall"/>
    <property type="evidence" value="ECO:0000314"/>
    <property type="project" value="TAIR"/>
</dbReference>
<dbReference type="GO" id="GO:0009506">
    <property type="term" value="C:plasmodesma"/>
    <property type="evidence" value="ECO:0000314"/>
    <property type="project" value="TAIR"/>
</dbReference>
<dbReference type="GO" id="GO:0099503">
    <property type="term" value="C:secretory vesicle"/>
    <property type="evidence" value="ECO:0007005"/>
    <property type="project" value="TAIR"/>
</dbReference>
<dbReference type="GO" id="GO:0050832">
    <property type="term" value="P:defense response to fungus"/>
    <property type="evidence" value="ECO:0000315"/>
    <property type="project" value="TAIR"/>
</dbReference>
<dbReference type="GO" id="GO:0009682">
    <property type="term" value="P:induced systemic resistance"/>
    <property type="evidence" value="ECO:0000315"/>
    <property type="project" value="TAIR"/>
</dbReference>
<dbReference type="GO" id="GO:0009737">
    <property type="term" value="P:response to abscisic acid"/>
    <property type="evidence" value="ECO:0000315"/>
    <property type="project" value="TAIR"/>
</dbReference>
<dbReference type="GO" id="GO:0009409">
    <property type="term" value="P:response to cold"/>
    <property type="evidence" value="ECO:0000315"/>
    <property type="project" value="TAIR"/>
</dbReference>
<dbReference type="GO" id="GO:0009651">
    <property type="term" value="P:response to salt stress"/>
    <property type="evidence" value="ECO:0000315"/>
    <property type="project" value="TAIR"/>
</dbReference>
<dbReference type="CDD" id="cd01958">
    <property type="entry name" value="HPS_like"/>
    <property type="match status" value="1"/>
</dbReference>
<dbReference type="FunFam" id="1.10.110.10:FF:000003">
    <property type="entry name" value="pEARLI1-like lipid transfer protein 1"/>
    <property type="match status" value="1"/>
</dbReference>
<dbReference type="Gene3D" id="1.10.110.10">
    <property type="entry name" value="Plant lipid-transfer and hydrophobic proteins"/>
    <property type="match status" value="1"/>
</dbReference>
<dbReference type="InterPro" id="IPR036312">
    <property type="entry name" value="Bifun_inhib/LTP/seed_sf"/>
</dbReference>
<dbReference type="InterPro" id="IPR016140">
    <property type="entry name" value="Bifunc_inhib/LTP/seed_store"/>
</dbReference>
<dbReference type="InterPro" id="IPR027923">
    <property type="entry name" value="Hydrophob_seed_dom"/>
</dbReference>
<dbReference type="InterPro" id="IPR051636">
    <property type="entry name" value="Plant_LTP/defense-related"/>
</dbReference>
<dbReference type="PANTHER" id="PTHR31731">
    <property type="match status" value="1"/>
</dbReference>
<dbReference type="Pfam" id="PF14547">
    <property type="entry name" value="Hydrophob_seed"/>
    <property type="match status" value="1"/>
</dbReference>
<dbReference type="SMART" id="SM00499">
    <property type="entry name" value="AAI"/>
    <property type="match status" value="1"/>
</dbReference>
<dbReference type="SUPFAM" id="SSF47699">
    <property type="entry name" value="Bifunctional inhibitor/lipid-transfer protein/seed storage 2S albumin"/>
    <property type="match status" value="1"/>
</dbReference>
<proteinExistence type="evidence at protein level"/>
<comment type="function">
    <text evidence="4 5 6 7 8">Probable lipid transfer protein (LTP). May improve freezing survival. Seems to control the flowering process and lignin synthesis. Has an auxiliary role for germinability and early seedling development under low temperature and salt stress conditions, probably in an abscisic acid- (ABA) dependent manner. Confers resistance to Botrytis cinerea and exhibits anti-fungal activity, at least against S.cerevisiae, B.cinerea and Fusarium oxysporum, probably by increasing their membrane permeability.</text>
</comment>
<comment type="subcellular location">
    <subcellularLocation>
        <location evidence="5">Secreted</location>
        <location evidence="5">Cell wall</location>
    </subcellularLocation>
</comment>
<comment type="tissue specificity">
    <text evidence="3 9">Mostly expressed in aerial part of seedlings, and, to a lower extent, in roots. Higher basal levels in early-flowering ecotypes.</text>
</comment>
<comment type="developmental stage">
    <text evidence="6">Induced during germination in embryonic tissues, and strongly expressed in certain parts of young seedlings, in the tips of cotyledons and to a certain degree in developing leaves and roots.</text>
</comment>
<comment type="induction">
    <text evidence="3 5 6 9">Transient accumulation in response to toxic levels of aluminum (Al). Stably activated by vernalization; vernalization and subsequent growth in long-day photoperiods have an additive or synergistic effect on this activation. Induced by both cold and salt.</text>
</comment>
<comment type="disruption phenotype">
    <text evidence="5 7">Increased tendency for freezing-induced cellular damage. Reduced cutin accumulation due to lower cutin biosynthesis. Early flowering in long-day conditions.</text>
</comment>
<comment type="similarity">
    <text evidence="10">Belongs to the plant LTP family. PEARLI1 subfamily.</text>
</comment>
<sequence>MASKNSASIALFFALNIIFFTLTAATDCGCNPSPKHKPVPSPKPKPVPSPKPKPVPSPSVPSPSVPSPNPRPVTPPRTPGSSGNCPIDALRLGVCANVLSSLLNIQLGQPSAQPCCSLIQGLVDLDAAICLCTALRANVLGINLNVPISLSVLLNVCNRKVPSGFQCA</sequence>
<name>ERLI1_ARATH</name>